<keyword id="KW-0150">Chloroplast</keyword>
<keyword id="KW-0472">Membrane</keyword>
<keyword id="KW-0520">NAD</keyword>
<keyword id="KW-0521">NADP</keyword>
<keyword id="KW-0934">Plastid</keyword>
<keyword id="KW-0618">Plastoquinone</keyword>
<keyword id="KW-0874">Quinone</keyword>
<keyword id="KW-0793">Thylakoid</keyword>
<keyword id="KW-1278">Translocase</keyword>
<keyword id="KW-0812">Transmembrane</keyword>
<keyword id="KW-1133">Transmembrane helix</keyword>
<feature type="chain" id="PRO_0000343302" description="NAD(P)H-quinone oxidoreductase chain 4, chloroplastic">
    <location>
        <begin position="1"/>
        <end position="500"/>
    </location>
</feature>
<feature type="transmembrane region" description="Helical" evidence="1">
    <location>
        <begin position="3"/>
        <end position="23"/>
    </location>
</feature>
<feature type="transmembrane region" description="Helical" evidence="1">
    <location>
        <begin position="37"/>
        <end position="57"/>
    </location>
</feature>
<feature type="transmembrane region" description="Helical" evidence="1">
    <location>
        <begin position="87"/>
        <end position="107"/>
    </location>
</feature>
<feature type="transmembrane region" description="Helical" evidence="1">
    <location>
        <begin position="113"/>
        <end position="130"/>
    </location>
</feature>
<feature type="transmembrane region" description="Helical" evidence="1">
    <location>
        <begin position="134"/>
        <end position="154"/>
    </location>
</feature>
<feature type="transmembrane region" description="Helical" evidence="1">
    <location>
        <begin position="167"/>
        <end position="187"/>
    </location>
</feature>
<feature type="transmembrane region" description="Helical" evidence="1">
    <location>
        <begin position="208"/>
        <end position="228"/>
    </location>
</feature>
<feature type="transmembrane region" description="Helical" evidence="1">
    <location>
        <begin position="242"/>
        <end position="262"/>
    </location>
</feature>
<feature type="transmembrane region" description="Helical" evidence="1">
    <location>
        <begin position="272"/>
        <end position="292"/>
    </location>
</feature>
<feature type="transmembrane region" description="Helical" evidence="1">
    <location>
        <begin position="305"/>
        <end position="325"/>
    </location>
</feature>
<feature type="transmembrane region" description="Helical" evidence="1">
    <location>
        <begin position="330"/>
        <end position="350"/>
    </location>
</feature>
<feature type="transmembrane region" description="Helical" evidence="1">
    <location>
        <begin position="386"/>
        <end position="406"/>
    </location>
</feature>
<feature type="transmembrane region" description="Helical" evidence="1">
    <location>
        <begin position="416"/>
        <end position="436"/>
    </location>
</feature>
<feature type="transmembrane region" description="Helical" evidence="1">
    <location>
        <begin position="462"/>
        <end position="482"/>
    </location>
</feature>
<accession>Q09FZ6</accession>
<comment type="catalytic activity">
    <reaction evidence="1">
        <text>a plastoquinone + NADH + (n+1) H(+)(in) = a plastoquinol + NAD(+) + n H(+)(out)</text>
        <dbReference type="Rhea" id="RHEA:42608"/>
        <dbReference type="Rhea" id="RHEA-COMP:9561"/>
        <dbReference type="Rhea" id="RHEA-COMP:9562"/>
        <dbReference type="ChEBI" id="CHEBI:15378"/>
        <dbReference type="ChEBI" id="CHEBI:17757"/>
        <dbReference type="ChEBI" id="CHEBI:57540"/>
        <dbReference type="ChEBI" id="CHEBI:57945"/>
        <dbReference type="ChEBI" id="CHEBI:62192"/>
    </reaction>
</comment>
<comment type="catalytic activity">
    <reaction evidence="1">
        <text>a plastoquinone + NADPH + (n+1) H(+)(in) = a plastoquinol + NADP(+) + n H(+)(out)</text>
        <dbReference type="Rhea" id="RHEA:42612"/>
        <dbReference type="Rhea" id="RHEA-COMP:9561"/>
        <dbReference type="Rhea" id="RHEA-COMP:9562"/>
        <dbReference type="ChEBI" id="CHEBI:15378"/>
        <dbReference type="ChEBI" id="CHEBI:17757"/>
        <dbReference type="ChEBI" id="CHEBI:57783"/>
        <dbReference type="ChEBI" id="CHEBI:58349"/>
        <dbReference type="ChEBI" id="CHEBI:62192"/>
    </reaction>
</comment>
<comment type="subcellular location">
    <subcellularLocation>
        <location evidence="1">Plastid</location>
        <location evidence="1">Chloroplast thylakoid membrane</location>
        <topology evidence="1">Multi-pass membrane protein</topology>
    </subcellularLocation>
</comment>
<comment type="similarity">
    <text evidence="1">Belongs to the complex I subunit 4 family.</text>
</comment>
<name>NU4C_PLAOC</name>
<reference key="1">
    <citation type="journal article" date="2006" name="BMC Plant Biol.">
        <title>Rapid and accurate pyrosequencing of angiosperm plastid genomes.</title>
        <authorList>
            <person name="Moore M.J."/>
            <person name="Dhingra A."/>
            <person name="Soltis P.S."/>
            <person name="Shaw R."/>
            <person name="Farmerie W.G."/>
            <person name="Folta K.M."/>
            <person name="Soltis D.E."/>
        </authorList>
    </citation>
    <scope>NUCLEOTIDE SEQUENCE [LARGE SCALE GENOMIC DNA]</scope>
</reference>
<organism>
    <name type="scientific">Platanus occidentalis</name>
    <name type="common">Sycamore</name>
    <name type="synonym">American plane tree</name>
    <dbReference type="NCBI Taxonomy" id="4403"/>
    <lineage>
        <taxon>Eukaryota</taxon>
        <taxon>Viridiplantae</taxon>
        <taxon>Streptophyta</taxon>
        <taxon>Embryophyta</taxon>
        <taxon>Tracheophyta</taxon>
        <taxon>Spermatophyta</taxon>
        <taxon>Magnoliopsida</taxon>
        <taxon>Proteales</taxon>
        <taxon>Platanaceae</taxon>
        <taxon>Platanus</taxon>
    </lineage>
</organism>
<evidence type="ECO:0000255" key="1">
    <source>
        <dbReference type="HAMAP-Rule" id="MF_00491"/>
    </source>
</evidence>
<gene>
    <name evidence="1" type="primary">ndhD</name>
</gene>
<sequence>MNFFPWLTIIVVLPISAGSLIFFLPHRGNKAIRWYTICICLLELLLITYVFCYHFQLDDPLIQLEEDYKWINIFDFHWRLGIDGLSIGPILLTGFITTLATLAAWPITRDSRLFHFLMLAMYSGQIGSFSSRDLLLFFIMWELELIPVYLLLSMWGGKKRLYSATKFILYTAGGSIFLLMGVLGMGLYGSNEPTLNFETSANQSYPVALEIMFYFGFLIAYAVKSPIIPLHTWLPDTHGEAHYSTCMLLAGILLKMGAYGLVRINMELLPHAHSIFSPWLMIVGTIQIIYAASTSPGQRNLKKRIAYSSVSHMGFTIIGIGSITDAGLNGAVLQIISHGFIGAALFFLAGTSYDRIRLVYLDEMGGIAISMPKIFTMFSSFSMASLALPGMSGFVAELIVFFGIITSPKYFLMPKILITFVMAIGMILTPIYSLSMSRQMFYGYKLFNAPNSYFFDSGPRELFVSISIFLPVIGIGIYPDFVLSLSVDKVEAILSNYFYK</sequence>
<geneLocation type="chloroplast"/>
<dbReference type="EC" id="7.1.1.-" evidence="1"/>
<dbReference type="EMBL" id="DQ923116">
    <property type="protein sequence ID" value="ABI49829.1"/>
    <property type="molecule type" value="Genomic_DNA"/>
</dbReference>
<dbReference type="RefSeq" id="YP_740615.1">
    <property type="nucleotide sequence ID" value="NC_008335.1"/>
</dbReference>
<dbReference type="SMR" id="Q09FZ6"/>
<dbReference type="GeneID" id="4271354"/>
<dbReference type="GO" id="GO:0009535">
    <property type="term" value="C:chloroplast thylakoid membrane"/>
    <property type="evidence" value="ECO:0007669"/>
    <property type="project" value="UniProtKB-SubCell"/>
</dbReference>
<dbReference type="GO" id="GO:0008137">
    <property type="term" value="F:NADH dehydrogenase (ubiquinone) activity"/>
    <property type="evidence" value="ECO:0007669"/>
    <property type="project" value="InterPro"/>
</dbReference>
<dbReference type="GO" id="GO:0048039">
    <property type="term" value="F:ubiquinone binding"/>
    <property type="evidence" value="ECO:0007669"/>
    <property type="project" value="TreeGrafter"/>
</dbReference>
<dbReference type="GO" id="GO:0042773">
    <property type="term" value="P:ATP synthesis coupled electron transport"/>
    <property type="evidence" value="ECO:0007669"/>
    <property type="project" value="InterPro"/>
</dbReference>
<dbReference type="GO" id="GO:0015990">
    <property type="term" value="P:electron transport coupled proton transport"/>
    <property type="evidence" value="ECO:0007669"/>
    <property type="project" value="TreeGrafter"/>
</dbReference>
<dbReference type="HAMAP" id="MF_00491">
    <property type="entry name" value="NDH1_NuoM"/>
    <property type="match status" value="1"/>
</dbReference>
<dbReference type="InterPro" id="IPR022997">
    <property type="entry name" value="NADH_Q_OxRdtase_chain4"/>
</dbReference>
<dbReference type="InterPro" id="IPR010227">
    <property type="entry name" value="NADH_Q_OxRdtase_chainM/4"/>
</dbReference>
<dbReference type="InterPro" id="IPR003918">
    <property type="entry name" value="NADH_UbQ_OxRdtase"/>
</dbReference>
<dbReference type="InterPro" id="IPR001750">
    <property type="entry name" value="ND/Mrp_TM"/>
</dbReference>
<dbReference type="NCBIfam" id="TIGR01972">
    <property type="entry name" value="NDH_I_M"/>
    <property type="match status" value="1"/>
</dbReference>
<dbReference type="PANTHER" id="PTHR43507:SF21">
    <property type="entry name" value="NAD(P)H-QUINONE OXIDOREDUCTASE CHAIN 4, CHLOROPLASTIC"/>
    <property type="match status" value="1"/>
</dbReference>
<dbReference type="PANTHER" id="PTHR43507">
    <property type="entry name" value="NADH-UBIQUINONE OXIDOREDUCTASE CHAIN 4"/>
    <property type="match status" value="1"/>
</dbReference>
<dbReference type="Pfam" id="PF00361">
    <property type="entry name" value="Proton_antipo_M"/>
    <property type="match status" value="1"/>
</dbReference>
<dbReference type="PRINTS" id="PR01437">
    <property type="entry name" value="NUOXDRDTASE4"/>
</dbReference>
<proteinExistence type="inferred from homology"/>
<protein>
    <recommendedName>
        <fullName evidence="1">NAD(P)H-quinone oxidoreductase chain 4, chloroplastic</fullName>
        <ecNumber evidence="1">7.1.1.-</ecNumber>
    </recommendedName>
    <alternativeName>
        <fullName evidence="1">NAD(P)H dehydrogenase, chain 4</fullName>
    </alternativeName>
    <alternativeName>
        <fullName evidence="1">NADH-plastoquinone oxidoreductase chain 4</fullName>
    </alternativeName>
</protein>